<dbReference type="EMBL" id="CP000958">
    <property type="protein sequence ID" value="ACA89518.1"/>
    <property type="molecule type" value="Genomic_DNA"/>
</dbReference>
<dbReference type="RefSeq" id="WP_006477187.1">
    <property type="nucleotide sequence ID" value="NC_010508.1"/>
</dbReference>
<dbReference type="SMR" id="B1JU33"/>
<dbReference type="GeneID" id="98107149"/>
<dbReference type="KEGG" id="bcm:Bcenmc03_0338"/>
<dbReference type="HOGENOM" id="CLU_093315_2_2_4"/>
<dbReference type="Proteomes" id="UP000002169">
    <property type="component" value="Chromosome 1"/>
</dbReference>
<dbReference type="GO" id="GO:1990904">
    <property type="term" value="C:ribonucleoprotein complex"/>
    <property type="evidence" value="ECO:0007669"/>
    <property type="project" value="UniProtKB-KW"/>
</dbReference>
<dbReference type="GO" id="GO:0005840">
    <property type="term" value="C:ribosome"/>
    <property type="evidence" value="ECO:0007669"/>
    <property type="project" value="UniProtKB-KW"/>
</dbReference>
<dbReference type="GO" id="GO:0019843">
    <property type="term" value="F:rRNA binding"/>
    <property type="evidence" value="ECO:0007669"/>
    <property type="project" value="UniProtKB-UniRule"/>
</dbReference>
<dbReference type="GO" id="GO:0003735">
    <property type="term" value="F:structural constituent of ribosome"/>
    <property type="evidence" value="ECO:0007669"/>
    <property type="project" value="InterPro"/>
</dbReference>
<dbReference type="GO" id="GO:0006412">
    <property type="term" value="P:translation"/>
    <property type="evidence" value="ECO:0007669"/>
    <property type="project" value="UniProtKB-UniRule"/>
</dbReference>
<dbReference type="CDD" id="cd06089">
    <property type="entry name" value="KOW_RPL26"/>
    <property type="match status" value="1"/>
</dbReference>
<dbReference type="Gene3D" id="2.30.30.30">
    <property type="match status" value="1"/>
</dbReference>
<dbReference type="HAMAP" id="MF_01326_B">
    <property type="entry name" value="Ribosomal_uL24_B"/>
    <property type="match status" value="1"/>
</dbReference>
<dbReference type="InterPro" id="IPR014722">
    <property type="entry name" value="Rib_uL2_dom2"/>
</dbReference>
<dbReference type="InterPro" id="IPR003256">
    <property type="entry name" value="Ribosomal_uL24"/>
</dbReference>
<dbReference type="InterPro" id="IPR005825">
    <property type="entry name" value="Ribosomal_uL24_CS"/>
</dbReference>
<dbReference type="InterPro" id="IPR041988">
    <property type="entry name" value="Ribosomal_uL24_KOW"/>
</dbReference>
<dbReference type="InterPro" id="IPR008991">
    <property type="entry name" value="Translation_prot_SH3-like_sf"/>
</dbReference>
<dbReference type="NCBIfam" id="TIGR01079">
    <property type="entry name" value="rplX_bact"/>
    <property type="match status" value="1"/>
</dbReference>
<dbReference type="PANTHER" id="PTHR12903">
    <property type="entry name" value="MITOCHONDRIAL RIBOSOMAL PROTEIN L24"/>
    <property type="match status" value="1"/>
</dbReference>
<dbReference type="Pfam" id="PF17136">
    <property type="entry name" value="ribosomal_L24"/>
    <property type="match status" value="1"/>
</dbReference>
<dbReference type="SUPFAM" id="SSF50104">
    <property type="entry name" value="Translation proteins SH3-like domain"/>
    <property type="match status" value="1"/>
</dbReference>
<dbReference type="PROSITE" id="PS01108">
    <property type="entry name" value="RIBOSOMAL_L24"/>
    <property type="match status" value="1"/>
</dbReference>
<evidence type="ECO:0000255" key="1">
    <source>
        <dbReference type="HAMAP-Rule" id="MF_01326"/>
    </source>
</evidence>
<evidence type="ECO:0000305" key="2"/>
<proteinExistence type="inferred from homology"/>
<comment type="function">
    <text evidence="1">One of two assembly initiator proteins, it binds directly to the 5'-end of the 23S rRNA, where it nucleates assembly of the 50S subunit.</text>
</comment>
<comment type="function">
    <text evidence="1">One of the proteins that surrounds the polypeptide exit tunnel on the outside of the subunit.</text>
</comment>
<comment type="subunit">
    <text evidence="1">Part of the 50S ribosomal subunit.</text>
</comment>
<comment type="similarity">
    <text evidence="1">Belongs to the universal ribosomal protein uL24 family.</text>
</comment>
<gene>
    <name evidence="1" type="primary">rplX</name>
    <name type="ordered locus">Bcenmc03_0338</name>
</gene>
<protein>
    <recommendedName>
        <fullName evidence="1">Large ribosomal subunit protein uL24</fullName>
    </recommendedName>
    <alternativeName>
        <fullName evidence="2">50S ribosomal protein L24</fullName>
    </alternativeName>
</protein>
<accession>B1JU33</accession>
<reference key="1">
    <citation type="submission" date="2008-02" db="EMBL/GenBank/DDBJ databases">
        <title>Complete sequence of chromosome 1 of Burkholderia cenocepacia MC0-3.</title>
        <authorList>
            <person name="Copeland A."/>
            <person name="Lucas S."/>
            <person name="Lapidus A."/>
            <person name="Barry K."/>
            <person name="Bruce D."/>
            <person name="Goodwin L."/>
            <person name="Glavina del Rio T."/>
            <person name="Dalin E."/>
            <person name="Tice H."/>
            <person name="Pitluck S."/>
            <person name="Chain P."/>
            <person name="Malfatti S."/>
            <person name="Shin M."/>
            <person name="Vergez L."/>
            <person name="Schmutz J."/>
            <person name="Larimer F."/>
            <person name="Land M."/>
            <person name="Hauser L."/>
            <person name="Kyrpides N."/>
            <person name="Mikhailova N."/>
            <person name="Tiedje J."/>
            <person name="Richardson P."/>
        </authorList>
    </citation>
    <scope>NUCLEOTIDE SEQUENCE [LARGE SCALE GENOMIC DNA]</scope>
    <source>
        <strain>MC0-3</strain>
    </source>
</reference>
<name>RL24_BURO0</name>
<feature type="chain" id="PRO_1000141975" description="Large ribosomal subunit protein uL24">
    <location>
        <begin position="1"/>
        <end position="102"/>
    </location>
</feature>
<organism>
    <name type="scientific">Burkholderia orbicola (strain MC0-3)</name>
    <dbReference type="NCBI Taxonomy" id="406425"/>
    <lineage>
        <taxon>Bacteria</taxon>
        <taxon>Pseudomonadati</taxon>
        <taxon>Pseudomonadota</taxon>
        <taxon>Betaproteobacteria</taxon>
        <taxon>Burkholderiales</taxon>
        <taxon>Burkholderiaceae</taxon>
        <taxon>Burkholderia</taxon>
        <taxon>Burkholderia cepacia complex</taxon>
        <taxon>Burkholderia orbicola</taxon>
    </lineage>
</organism>
<sequence length="102" mass="10709">MNKIRKGDEVIVVTGKDKGKRGVVLAVGAEHVTVEGINLVKKHVKPNPMKGTTGGVEAKTMPLHISNVALVDANGKASRVGIKVEEGKKVRFLKTTGAVLSA</sequence>
<keyword id="KW-0687">Ribonucleoprotein</keyword>
<keyword id="KW-0689">Ribosomal protein</keyword>
<keyword id="KW-0694">RNA-binding</keyword>
<keyword id="KW-0699">rRNA-binding</keyword>